<sequence length="377" mass="42744">MLVHQVNTKLCSAKQFTHLAKVVTPALSYQASSVYSANLPRLAASPRLFSTTSSAQLRDFFPVKETEHIRQTPPTWPHHGLTEKEMVDVVPGHRKPRTLGDKFAWSLVRISRWGMDKVSGLSSEQQQINKGSPTTSIVAAKPLTEAQWLSRFIFLESIAAVPGMVAGMLRHLHSLRRLKRDNGWIETLLEEAYNERMHLLTFLKMCEPGWLMKILIIGAQGVYFNAMFVAYLISPKICHRFVGYLEEEAVHTYTRSIEELERGDLPKWSDPKFQVPEIAVSYWGMPEGHRTMRDLLLYIRADEANHRGVHHTLGNLNQVEDPNPFVSDYKGDKPRPVAASRPEGFEREEVIGKEVIGKEVIEKDVIGKEVLGKQVSV</sequence>
<protein>
    <recommendedName>
        <fullName>Alternative oxidase, mitochondrial</fullName>
        <ecNumber>1.-.-.-</ecNumber>
    </recommendedName>
    <alternativeName>
        <fullName>AOXMg</fullName>
    </alternativeName>
    <alternativeName>
        <fullName>MgAOX</fullName>
    </alternativeName>
</protein>
<accession>O93788</accession>
<accession>A4QTA4</accession>
<accession>G4N4P1</accession>
<dbReference type="EC" id="1.-.-.-"/>
<dbReference type="EMBL" id="AB005144">
    <property type="protein sequence ID" value="BAA34672.1"/>
    <property type="molecule type" value="mRNA"/>
</dbReference>
<dbReference type="EMBL" id="AF325683">
    <property type="protein sequence ID" value="AAG49588.1"/>
    <property type="molecule type" value="Genomic_DNA"/>
</dbReference>
<dbReference type="EMBL" id="CM001233">
    <property type="protein sequence ID" value="EHA52856.1"/>
    <property type="molecule type" value="Genomic_DNA"/>
</dbReference>
<dbReference type="RefSeq" id="XP_003712663.1">
    <property type="nucleotide sequence ID" value="XM_003712615.1"/>
</dbReference>
<dbReference type="SMR" id="O93788"/>
<dbReference type="STRING" id="242507.O93788"/>
<dbReference type="EnsemblFungi" id="MGG_12936T0">
    <property type="protein sequence ID" value="MGG_12936T0"/>
    <property type="gene ID" value="MGG_12936"/>
</dbReference>
<dbReference type="GeneID" id="5048866"/>
<dbReference type="KEGG" id="mgr:MGG_12936"/>
<dbReference type="VEuPathDB" id="FungiDB:MGG_12936"/>
<dbReference type="eggNOG" id="ENOG502QSB5">
    <property type="taxonomic scope" value="Eukaryota"/>
</dbReference>
<dbReference type="HOGENOM" id="CLU_041974_3_0_1"/>
<dbReference type="InParanoid" id="O93788"/>
<dbReference type="OMA" id="VHTYTRA"/>
<dbReference type="OrthoDB" id="16906at2759"/>
<dbReference type="Proteomes" id="UP000009058">
    <property type="component" value="Chromosome 3"/>
</dbReference>
<dbReference type="GO" id="GO:0005743">
    <property type="term" value="C:mitochondrial inner membrane"/>
    <property type="evidence" value="ECO:0007669"/>
    <property type="project" value="UniProtKB-SubCell"/>
</dbReference>
<dbReference type="GO" id="GO:0009916">
    <property type="term" value="F:alternative oxidase activity"/>
    <property type="evidence" value="ECO:0007669"/>
    <property type="project" value="InterPro"/>
</dbReference>
<dbReference type="GO" id="GO:0046872">
    <property type="term" value="F:metal ion binding"/>
    <property type="evidence" value="ECO:0007669"/>
    <property type="project" value="UniProtKB-KW"/>
</dbReference>
<dbReference type="GO" id="GO:0010230">
    <property type="term" value="P:alternative respiration"/>
    <property type="evidence" value="ECO:0007669"/>
    <property type="project" value="TreeGrafter"/>
</dbReference>
<dbReference type="CDD" id="cd01053">
    <property type="entry name" value="AOX"/>
    <property type="match status" value="1"/>
</dbReference>
<dbReference type="FunFam" id="1.20.1260.140:FF:000002">
    <property type="entry name" value="Alternative oxidase"/>
    <property type="match status" value="1"/>
</dbReference>
<dbReference type="Gene3D" id="1.20.1260.140">
    <property type="entry name" value="Alternative oxidase"/>
    <property type="match status" value="1"/>
</dbReference>
<dbReference type="InterPro" id="IPR002680">
    <property type="entry name" value="AOX"/>
</dbReference>
<dbReference type="InterPro" id="IPR038659">
    <property type="entry name" value="AOX_sf"/>
</dbReference>
<dbReference type="PANTHER" id="PTHR31803">
    <property type="entry name" value="ALTERNATIVE OXIDASE"/>
    <property type="match status" value="1"/>
</dbReference>
<dbReference type="PANTHER" id="PTHR31803:SF3">
    <property type="entry name" value="ALTERNATIVE OXIDASE"/>
    <property type="match status" value="1"/>
</dbReference>
<dbReference type="Pfam" id="PF01786">
    <property type="entry name" value="AOX"/>
    <property type="match status" value="1"/>
</dbReference>
<dbReference type="PIRSF" id="PIRSF005229">
    <property type="entry name" value="AOX"/>
    <property type="match status" value="1"/>
</dbReference>
<evidence type="ECO:0000250" key="1"/>
<evidence type="ECO:0000250" key="2">
    <source>
        <dbReference type="UniProtKB" id="Q26710"/>
    </source>
</evidence>
<evidence type="ECO:0000255" key="3"/>
<evidence type="ECO:0000305" key="4"/>
<name>AOX_PYRO7</name>
<organism>
    <name type="scientific">Pyricularia oryzae (strain 70-15 / ATCC MYA-4617 / FGSC 8958)</name>
    <name type="common">Rice blast fungus</name>
    <name type="synonym">Magnaporthe oryzae</name>
    <dbReference type="NCBI Taxonomy" id="242507"/>
    <lineage>
        <taxon>Eukaryota</taxon>
        <taxon>Fungi</taxon>
        <taxon>Dikarya</taxon>
        <taxon>Ascomycota</taxon>
        <taxon>Pezizomycotina</taxon>
        <taxon>Sordariomycetes</taxon>
        <taxon>Sordariomycetidae</taxon>
        <taxon>Magnaporthales</taxon>
        <taxon>Pyriculariaceae</taxon>
        <taxon>Pyricularia</taxon>
    </lineage>
</organism>
<reference key="1">
    <citation type="journal article" date="1998" name="Biochim. Biophys. Acta">
        <title>Transcriptional activation of the alternative oxidase gene of the fungus Magnaporthe grisea by a respiratory-inhibiting fungicide and hydrogen peroxide.</title>
        <authorList>
            <person name="Yukioka H."/>
            <person name="Inagaki S."/>
            <person name="Tanaka R."/>
            <person name="Katoh K."/>
            <person name="Miki N."/>
            <person name="Mizutani A."/>
            <person name="Masuko M."/>
        </authorList>
    </citation>
    <scope>NUCLEOTIDE SEQUENCE [MRNA]</scope>
    <source>
        <strain>Race 003</strain>
    </source>
</reference>
<reference key="2">
    <citation type="journal article" date="2002" name="Mol. Plant Microbe Interact.">
        <title>Disruption of the alternative oxidase gene in Magnaporthe grisea and its impact on host infection.</title>
        <authorList>
            <person name="Avila-Adame C."/>
            <person name="Koeller W."/>
        </authorList>
    </citation>
    <scope>NUCLEOTIDE SEQUENCE [GENOMIC DNA]</scope>
</reference>
<reference key="3">
    <citation type="journal article" date="2005" name="Nature">
        <title>The genome sequence of the rice blast fungus Magnaporthe grisea.</title>
        <authorList>
            <person name="Dean R.A."/>
            <person name="Talbot N.J."/>
            <person name="Ebbole D.J."/>
            <person name="Farman M.L."/>
            <person name="Mitchell T.K."/>
            <person name="Orbach M.J."/>
            <person name="Thon M.R."/>
            <person name="Kulkarni R."/>
            <person name="Xu J.-R."/>
            <person name="Pan H."/>
            <person name="Read N.D."/>
            <person name="Lee Y.-H."/>
            <person name="Carbone I."/>
            <person name="Brown D."/>
            <person name="Oh Y.Y."/>
            <person name="Donofrio N."/>
            <person name="Jeong J.S."/>
            <person name="Soanes D.M."/>
            <person name="Djonovic S."/>
            <person name="Kolomiets E."/>
            <person name="Rehmeyer C."/>
            <person name="Li W."/>
            <person name="Harding M."/>
            <person name="Kim S."/>
            <person name="Lebrun M.-H."/>
            <person name="Bohnert H."/>
            <person name="Coughlan S."/>
            <person name="Butler J."/>
            <person name="Calvo S.E."/>
            <person name="Ma L.-J."/>
            <person name="Nicol R."/>
            <person name="Purcell S."/>
            <person name="Nusbaum C."/>
            <person name="Galagan J.E."/>
            <person name="Birren B.W."/>
        </authorList>
    </citation>
    <scope>NUCLEOTIDE SEQUENCE [LARGE SCALE GENOMIC DNA]</scope>
    <source>
        <strain>70-15 / ATCC MYA-4617 / FGSC 8958</strain>
    </source>
</reference>
<feature type="transit peptide" description="Mitochondrion" evidence="3">
    <location>
        <begin position="1"/>
        <end status="unknown"/>
    </location>
</feature>
<feature type="chain" id="PRO_0000001723" description="Alternative oxidase, mitochondrial">
    <location>
        <begin status="unknown"/>
        <end position="377"/>
    </location>
</feature>
<feature type="transmembrane region" description="Helical" evidence="3">
    <location>
        <begin position="149"/>
        <end position="169"/>
    </location>
</feature>
<feature type="transmembrane region" description="Helical" evidence="3">
    <location>
        <begin position="214"/>
        <end position="234"/>
    </location>
</feature>
<feature type="binding site" evidence="2">
    <location>
        <position position="156"/>
    </location>
    <ligand>
        <name>Fe cation</name>
        <dbReference type="ChEBI" id="CHEBI:24875"/>
        <label>1</label>
    </ligand>
</feature>
<feature type="binding site" evidence="2">
    <location>
        <position position="195"/>
    </location>
    <ligand>
        <name>Fe cation</name>
        <dbReference type="ChEBI" id="CHEBI:24875"/>
        <label>1</label>
    </ligand>
</feature>
<feature type="binding site" evidence="2">
    <location>
        <position position="195"/>
    </location>
    <ligand>
        <name>Fe cation</name>
        <dbReference type="ChEBI" id="CHEBI:24875"/>
        <label>2</label>
    </ligand>
</feature>
<feature type="binding site" evidence="2">
    <location>
        <position position="198"/>
    </location>
    <ligand>
        <name>Fe cation</name>
        <dbReference type="ChEBI" id="CHEBI:24875"/>
        <label>1</label>
    </ligand>
</feature>
<feature type="binding site" evidence="2">
    <location>
        <position position="246"/>
    </location>
    <ligand>
        <name>Fe cation</name>
        <dbReference type="ChEBI" id="CHEBI:24875"/>
        <label>2</label>
    </ligand>
</feature>
<feature type="binding site" evidence="2">
    <location>
        <position position="303"/>
    </location>
    <ligand>
        <name>Fe cation</name>
        <dbReference type="ChEBI" id="CHEBI:24875"/>
        <label>1</label>
    </ligand>
</feature>
<feature type="binding site" evidence="2">
    <location>
        <position position="303"/>
    </location>
    <ligand>
        <name>Fe cation</name>
        <dbReference type="ChEBI" id="CHEBI:24875"/>
        <label>2</label>
    </ligand>
</feature>
<feature type="binding site" evidence="2">
    <location>
        <position position="306"/>
    </location>
    <ligand>
        <name>Fe cation</name>
        <dbReference type="ChEBI" id="CHEBI:24875"/>
        <label>2</label>
    </ligand>
</feature>
<gene>
    <name type="primary">AOX1</name>
    <name type="ORF">MGG_12936</name>
</gene>
<keyword id="KW-0249">Electron transport</keyword>
<keyword id="KW-0408">Iron</keyword>
<keyword id="KW-0472">Membrane</keyword>
<keyword id="KW-0479">Metal-binding</keyword>
<keyword id="KW-0496">Mitochondrion</keyword>
<keyword id="KW-0999">Mitochondrion inner membrane</keyword>
<keyword id="KW-0560">Oxidoreductase</keyword>
<keyword id="KW-1185">Reference proteome</keyword>
<keyword id="KW-0679">Respiratory chain</keyword>
<keyword id="KW-0809">Transit peptide</keyword>
<keyword id="KW-0812">Transmembrane</keyword>
<keyword id="KW-1133">Transmembrane helix</keyword>
<keyword id="KW-0813">Transport</keyword>
<proteinExistence type="evidence at transcript level"/>
<comment type="function">
    <text evidence="1">Catalyzes cyanide-resistant oxygen consumption. May increase respiration when the cytochrome respiratory pathway is restricted, or in response to low temperatures (By similarity).</text>
</comment>
<comment type="cofactor">
    <cofactor evidence="2">
        <name>Fe cation</name>
        <dbReference type="ChEBI" id="CHEBI:24875"/>
    </cofactor>
    <text evidence="2">Binds 2 iron ions per subunit.</text>
</comment>
<comment type="subcellular location">
    <subcellularLocation>
        <location evidence="1">Mitochondrion inner membrane</location>
        <topology evidence="1">Multi-pass membrane protein</topology>
        <orientation evidence="1">Matrix side</orientation>
    </subcellularLocation>
</comment>
<comment type="similarity">
    <text evidence="4">Belongs to the alternative oxidase family.</text>
</comment>